<keyword id="KW-0963">Cytoplasm</keyword>
<keyword id="KW-1185">Reference proteome</keyword>
<keyword id="KW-0694">RNA-binding</keyword>
<keyword id="KW-0808">Transferase</keyword>
<keyword id="KW-0819">tRNA processing</keyword>
<keyword id="KW-0820">tRNA-binding</keyword>
<dbReference type="EC" id="2.7.7.-" evidence="1"/>
<dbReference type="EMBL" id="HE601298">
    <property type="protein sequence ID" value="CAP22971.1"/>
    <property type="molecule type" value="Genomic_DNA"/>
</dbReference>
<dbReference type="SMR" id="A8WR63"/>
<dbReference type="FunCoup" id="A8WR63">
    <property type="interactions" value="1303"/>
</dbReference>
<dbReference type="STRING" id="6238.A8WR63"/>
<dbReference type="EnsemblMetazoa" id="CBG01646.1">
    <property type="protein sequence ID" value="CBG01646.1"/>
    <property type="gene ID" value="WBGene00024852"/>
</dbReference>
<dbReference type="KEGG" id="cbr:CBG_01646"/>
<dbReference type="CTD" id="8576091"/>
<dbReference type="WormBase" id="CBG01646">
    <property type="protein sequence ID" value="CBP00437"/>
    <property type="gene ID" value="WBGene00024852"/>
    <property type="gene designation" value="Cbr-tut-1"/>
</dbReference>
<dbReference type="eggNOG" id="KOG2840">
    <property type="taxonomic scope" value="Eukaryota"/>
</dbReference>
<dbReference type="HOGENOM" id="CLU_026481_1_2_1"/>
<dbReference type="InParanoid" id="A8WR63"/>
<dbReference type="OMA" id="KPVRGIC"/>
<dbReference type="UniPathway" id="UPA00988"/>
<dbReference type="Proteomes" id="UP000008549">
    <property type="component" value="Unassembled WGS sequence"/>
</dbReference>
<dbReference type="GO" id="GO:0005829">
    <property type="term" value="C:cytosol"/>
    <property type="evidence" value="ECO:0000250"/>
    <property type="project" value="UniProtKB"/>
</dbReference>
<dbReference type="GO" id="GO:0002144">
    <property type="term" value="C:cytosolic tRNA wobble base thiouridylase complex"/>
    <property type="evidence" value="ECO:0000318"/>
    <property type="project" value="GO_Central"/>
</dbReference>
<dbReference type="GO" id="GO:0016779">
    <property type="term" value="F:nucleotidyltransferase activity"/>
    <property type="evidence" value="ECO:0007669"/>
    <property type="project" value="UniProtKB-UniRule"/>
</dbReference>
<dbReference type="GO" id="GO:0016783">
    <property type="term" value="F:sulfurtransferase activity"/>
    <property type="evidence" value="ECO:0007669"/>
    <property type="project" value="EnsemblMetazoa"/>
</dbReference>
<dbReference type="GO" id="GO:0000049">
    <property type="term" value="F:tRNA binding"/>
    <property type="evidence" value="ECO:0000250"/>
    <property type="project" value="UniProtKB"/>
</dbReference>
<dbReference type="GO" id="GO:0048598">
    <property type="term" value="P:embryonic morphogenesis"/>
    <property type="evidence" value="ECO:0007669"/>
    <property type="project" value="EnsemblMetazoa"/>
</dbReference>
<dbReference type="GO" id="GO:0048599">
    <property type="term" value="P:oocyte development"/>
    <property type="evidence" value="ECO:0007669"/>
    <property type="project" value="EnsemblMetazoa"/>
</dbReference>
<dbReference type="GO" id="GO:0032447">
    <property type="term" value="P:protein urmylation"/>
    <property type="evidence" value="ECO:0007669"/>
    <property type="project" value="UniProtKB-UniRule"/>
</dbReference>
<dbReference type="GO" id="GO:0007283">
    <property type="term" value="P:spermatogenesis"/>
    <property type="evidence" value="ECO:0007669"/>
    <property type="project" value="EnsemblMetazoa"/>
</dbReference>
<dbReference type="GO" id="GO:0006412">
    <property type="term" value="P:translation"/>
    <property type="evidence" value="ECO:0007669"/>
    <property type="project" value="EnsemblMetazoa"/>
</dbReference>
<dbReference type="GO" id="GO:0034227">
    <property type="term" value="P:tRNA thio-modification"/>
    <property type="evidence" value="ECO:0000250"/>
    <property type="project" value="UniProtKB"/>
</dbReference>
<dbReference type="GO" id="GO:0002143">
    <property type="term" value="P:tRNA wobble position uridine thiolation"/>
    <property type="evidence" value="ECO:0000318"/>
    <property type="project" value="GO_Central"/>
</dbReference>
<dbReference type="GO" id="GO:0002098">
    <property type="term" value="P:tRNA wobble uridine modification"/>
    <property type="evidence" value="ECO:0000250"/>
    <property type="project" value="UniProtKB"/>
</dbReference>
<dbReference type="GO" id="GO:0040025">
    <property type="term" value="P:vulval development"/>
    <property type="evidence" value="ECO:0007669"/>
    <property type="project" value="EnsemblMetazoa"/>
</dbReference>
<dbReference type="CDD" id="cd01713">
    <property type="entry name" value="CTU1-like"/>
    <property type="match status" value="1"/>
</dbReference>
<dbReference type="FunFam" id="3.40.50.620:FF:000132">
    <property type="entry name" value="Cytoplasmic tRNA 2-thiolation protein 1"/>
    <property type="match status" value="1"/>
</dbReference>
<dbReference type="Gene3D" id="3.40.50.620">
    <property type="entry name" value="HUPs"/>
    <property type="match status" value="1"/>
</dbReference>
<dbReference type="HAMAP" id="MF_03053">
    <property type="entry name" value="CTU1"/>
    <property type="match status" value="1"/>
</dbReference>
<dbReference type="InterPro" id="IPR056369">
    <property type="entry name" value="CTU1-like_ATP-bd"/>
</dbReference>
<dbReference type="InterPro" id="IPR032442">
    <property type="entry name" value="CTU1_C"/>
</dbReference>
<dbReference type="InterPro" id="IPR000541">
    <property type="entry name" value="Ncs6/Tuc1/Ctu1"/>
</dbReference>
<dbReference type="InterPro" id="IPR014729">
    <property type="entry name" value="Rossmann-like_a/b/a_fold"/>
</dbReference>
<dbReference type="InterPro" id="IPR011063">
    <property type="entry name" value="TilS/TtcA_N"/>
</dbReference>
<dbReference type="InterPro" id="IPR035107">
    <property type="entry name" value="tRNA_thiolation_TtcA_Ctu1"/>
</dbReference>
<dbReference type="NCBIfam" id="TIGR00269">
    <property type="entry name" value="TIGR00269 family protein"/>
    <property type="match status" value="1"/>
</dbReference>
<dbReference type="PANTHER" id="PTHR11807">
    <property type="entry name" value="ATPASES OF THE PP SUPERFAMILY-RELATED"/>
    <property type="match status" value="1"/>
</dbReference>
<dbReference type="PANTHER" id="PTHR11807:SF12">
    <property type="entry name" value="CYTOPLASMIC TRNA 2-THIOLATION PROTEIN 1"/>
    <property type="match status" value="1"/>
</dbReference>
<dbReference type="Pfam" id="PF01171">
    <property type="entry name" value="ATP_bind_3"/>
    <property type="match status" value="1"/>
</dbReference>
<dbReference type="Pfam" id="PF16503">
    <property type="entry name" value="zn-ribbon_14"/>
    <property type="match status" value="1"/>
</dbReference>
<dbReference type="PIRSF" id="PIRSF004976">
    <property type="entry name" value="ATPase_YdaO"/>
    <property type="match status" value="1"/>
</dbReference>
<dbReference type="SUPFAM" id="SSF52402">
    <property type="entry name" value="Adenine nucleotide alpha hydrolases-like"/>
    <property type="match status" value="1"/>
</dbReference>
<gene>
    <name evidence="1" type="primary">tut-1</name>
    <name evidence="1" type="synonym">ctu-1</name>
    <name type="ORF">CBG01646</name>
</gene>
<name>CTU1_CAEBR</name>
<proteinExistence type="inferred from homology"/>
<feature type="chain" id="PRO_0000368238" description="Cytoplasmic tRNA 2-thiolation protein 1">
    <location>
        <begin position="1"/>
        <end position="372"/>
    </location>
</feature>
<feature type="region of interest" description="Disordered" evidence="2">
    <location>
        <begin position="335"/>
        <end position="372"/>
    </location>
</feature>
<feature type="compositionally biased region" description="Gly residues" evidence="2">
    <location>
        <begin position="341"/>
        <end position="351"/>
    </location>
</feature>
<feature type="compositionally biased region" description="Basic and acidic residues" evidence="2">
    <location>
        <begin position="361"/>
        <end position="372"/>
    </location>
</feature>
<evidence type="ECO:0000255" key="1">
    <source>
        <dbReference type="HAMAP-Rule" id="MF_03053"/>
    </source>
</evidence>
<evidence type="ECO:0000256" key="2">
    <source>
        <dbReference type="SAM" id="MobiDB-lite"/>
    </source>
</evidence>
<comment type="function">
    <text evidence="1">Plays a central role in 2-thiolation of mcm(5)S(2)U at tRNA wobble positions of tRNA(Lys), tRNA(Glu) and tRNA(Gln). Directly binds tRNAs and probably acts by catalyzing adenylation of tRNAs, an intermediate required for 2-thiolation. It is unclear whether it acts as a sulfurtransferase that transfers sulfur from thiocarboxylated URM1 onto the uridine of tRNAs at wobble position.</text>
</comment>
<comment type="pathway">
    <text evidence="1">tRNA modification; 5-methoxycarbonylmethyl-2-thiouridine-tRNA biosynthesis.</text>
</comment>
<comment type="subcellular location">
    <subcellularLocation>
        <location evidence="1">Cytoplasm</location>
    </subcellularLocation>
</comment>
<comment type="similarity">
    <text evidence="1">Belongs to the TtcA family. CTU1/NCS6/ATPBD3 subfamily.</text>
</comment>
<accession>A8WR63</accession>
<organism>
    <name type="scientific">Caenorhabditis briggsae</name>
    <dbReference type="NCBI Taxonomy" id="6238"/>
    <lineage>
        <taxon>Eukaryota</taxon>
        <taxon>Metazoa</taxon>
        <taxon>Ecdysozoa</taxon>
        <taxon>Nematoda</taxon>
        <taxon>Chromadorea</taxon>
        <taxon>Rhabditida</taxon>
        <taxon>Rhabditina</taxon>
        <taxon>Rhabditomorpha</taxon>
        <taxon>Rhabditoidea</taxon>
        <taxon>Rhabditidae</taxon>
        <taxon>Peloderinae</taxon>
        <taxon>Caenorhabditis</taxon>
    </lineage>
</organism>
<reference key="1">
    <citation type="journal article" date="2003" name="PLoS Biol.">
        <title>The genome sequence of Caenorhabditis briggsae: a platform for comparative genomics.</title>
        <authorList>
            <person name="Stein L.D."/>
            <person name="Bao Z."/>
            <person name="Blasiar D."/>
            <person name="Blumenthal T."/>
            <person name="Brent M.R."/>
            <person name="Chen N."/>
            <person name="Chinwalla A."/>
            <person name="Clarke L."/>
            <person name="Clee C."/>
            <person name="Coghlan A."/>
            <person name="Coulson A."/>
            <person name="D'Eustachio P."/>
            <person name="Fitch D.H.A."/>
            <person name="Fulton L.A."/>
            <person name="Fulton R.E."/>
            <person name="Griffiths-Jones S."/>
            <person name="Harris T.W."/>
            <person name="Hillier L.W."/>
            <person name="Kamath R."/>
            <person name="Kuwabara P.E."/>
            <person name="Mardis E.R."/>
            <person name="Marra M.A."/>
            <person name="Miner T.L."/>
            <person name="Minx P."/>
            <person name="Mullikin J.C."/>
            <person name="Plumb R.W."/>
            <person name="Rogers J."/>
            <person name="Schein J.E."/>
            <person name="Sohrmann M."/>
            <person name="Spieth J."/>
            <person name="Stajich J.E."/>
            <person name="Wei C."/>
            <person name="Willey D."/>
            <person name="Wilson R.K."/>
            <person name="Durbin R.M."/>
            <person name="Waterston R.H."/>
        </authorList>
    </citation>
    <scope>NUCLEOTIDE SEQUENCE [LARGE SCALE GENOMIC DNA]</scope>
    <source>
        <strain>AF16</strain>
    </source>
</reference>
<protein>
    <recommendedName>
        <fullName evidence="1">Cytoplasmic tRNA 2-thiolation protein 1</fullName>
        <ecNumber evidence="1">2.7.7.-</ecNumber>
    </recommendedName>
    <alternativeName>
        <fullName evidence="1">Cytoplasmic tRNA adenylyltransferase 1</fullName>
    </alternativeName>
    <alternativeName>
        <fullName evidence="1">Thiolation of uridine in tRNA protein 1</fullName>
    </alternativeName>
</protein>
<sequence length="372" mass="41317">MEKRRGPPPCQSEEGCSNSAKIRKAKNGAQLCGPCFSKSFEDDVHETIINNNLFKRGERVAIGASGGKDSTVLAFVMKTLNDRHDYGLDLQLLSIDEGIKGYRDDSLLAVEKNRVEYGLPLTILSYNDLYGWTMDDIVAKIGKKNNCTFCGVFRRQALDRGAFKIGATKLVTGHNADDMAETVLMNVLRGDIARLERCTNIVTGEEGDLPRAKPLKYCFERDIVMYARSNQLEYFYTECIYAPNAYRGYARKYVRDLEKVHPRAILDLIRSGEKVSVKKEVEMPTLKTCERCGYMTSQKMCKACLLIEGLNTGNTDLGVRKSKKTKKVIVETEGGKKEDGGCGSGGGGCGCAGAADETENEETRKRLKDLQF</sequence>